<gene>
    <name type="primary">SQT1</name>
    <name type="ordered locus">YIR012W</name>
    <name type="ORF">YIB12W</name>
</gene>
<feature type="chain" id="PRO_0000051227" description="Ribosome assembly protein SQT1">
    <location>
        <begin position="1"/>
        <end position="431"/>
    </location>
</feature>
<feature type="repeat" description="WD 1">
    <location>
        <begin position="63"/>
        <end position="102"/>
    </location>
</feature>
<feature type="repeat" description="WD 2">
    <location>
        <begin position="107"/>
        <end position="146"/>
    </location>
</feature>
<feature type="repeat" description="WD 3">
    <location>
        <begin position="149"/>
        <end position="192"/>
    </location>
</feature>
<feature type="repeat" description="WD 4">
    <location>
        <begin position="199"/>
        <end position="243"/>
    </location>
</feature>
<feature type="repeat" description="WD 5">
    <location>
        <begin position="309"/>
        <end position="348"/>
    </location>
</feature>
<feature type="repeat" description="WD 6">
    <location>
        <begin position="350"/>
        <end position="387"/>
    </location>
</feature>
<feature type="strand" evidence="2">
    <location>
        <begin position="58"/>
        <end position="61"/>
    </location>
</feature>
<feature type="strand" evidence="2">
    <location>
        <begin position="68"/>
        <end position="73"/>
    </location>
</feature>
<feature type="strand" evidence="2">
    <location>
        <begin position="75"/>
        <end position="84"/>
    </location>
</feature>
<feature type="strand" evidence="2">
    <location>
        <begin position="89"/>
        <end position="98"/>
    </location>
</feature>
<feature type="strand" evidence="2">
    <location>
        <begin position="101"/>
        <end position="105"/>
    </location>
</feature>
<feature type="strand" evidence="2">
    <location>
        <begin position="112"/>
        <end position="117"/>
    </location>
</feature>
<feature type="strand" evidence="2">
    <location>
        <begin position="121"/>
        <end position="128"/>
    </location>
</feature>
<feature type="strand" evidence="2">
    <location>
        <begin position="131"/>
        <end position="139"/>
    </location>
</feature>
<feature type="helix" evidence="2">
    <location>
        <begin position="140"/>
        <end position="142"/>
    </location>
</feature>
<feature type="strand" evidence="2">
    <location>
        <begin position="144"/>
        <end position="152"/>
    </location>
</feature>
<feature type="strand" evidence="2">
    <location>
        <begin position="157"/>
        <end position="162"/>
    </location>
</feature>
<feature type="strand" evidence="2">
    <location>
        <begin position="164"/>
        <end position="166"/>
    </location>
</feature>
<feature type="strand" evidence="2">
    <location>
        <begin position="169"/>
        <end position="174"/>
    </location>
</feature>
<feature type="strand" evidence="2">
    <location>
        <begin position="179"/>
        <end position="184"/>
    </location>
</feature>
<feature type="turn" evidence="2">
    <location>
        <begin position="186"/>
        <end position="188"/>
    </location>
</feature>
<feature type="strand" evidence="2">
    <location>
        <begin position="191"/>
        <end position="197"/>
    </location>
</feature>
<feature type="strand" evidence="2">
    <location>
        <begin position="204"/>
        <end position="210"/>
    </location>
</feature>
<feature type="strand" evidence="2">
    <location>
        <begin position="220"/>
        <end position="225"/>
    </location>
</feature>
<feature type="strand" evidence="2">
    <location>
        <begin position="230"/>
        <end position="234"/>
    </location>
</feature>
<feature type="turn" evidence="2">
    <location>
        <begin position="235"/>
        <end position="237"/>
    </location>
</feature>
<feature type="strand" evidence="2">
    <location>
        <begin position="240"/>
        <end position="244"/>
    </location>
</feature>
<feature type="helix" evidence="2">
    <location>
        <begin position="246"/>
        <end position="248"/>
    </location>
</feature>
<feature type="turn" evidence="2">
    <location>
        <begin position="249"/>
        <end position="251"/>
    </location>
</feature>
<feature type="strand" evidence="2">
    <location>
        <begin position="256"/>
        <end position="261"/>
    </location>
</feature>
<feature type="helix" evidence="2">
    <location>
        <begin position="264"/>
        <end position="266"/>
    </location>
</feature>
<feature type="turn" evidence="2">
    <location>
        <begin position="267"/>
        <end position="269"/>
    </location>
</feature>
<feature type="strand" evidence="2">
    <location>
        <begin position="273"/>
        <end position="278"/>
    </location>
</feature>
<feature type="strand" evidence="2">
    <location>
        <begin position="281"/>
        <end position="287"/>
    </location>
</feature>
<feature type="turn" evidence="2">
    <location>
        <begin position="288"/>
        <end position="292"/>
    </location>
</feature>
<feature type="strand" evidence="2">
    <location>
        <begin position="294"/>
        <end position="299"/>
    </location>
</feature>
<feature type="strand" evidence="3">
    <location>
        <begin position="305"/>
        <end position="307"/>
    </location>
</feature>
<feature type="helix" evidence="2">
    <location>
        <begin position="309"/>
        <end position="312"/>
    </location>
</feature>
<feature type="strand" evidence="2">
    <location>
        <begin position="314"/>
        <end position="320"/>
    </location>
</feature>
<feature type="turn" evidence="2">
    <location>
        <begin position="321"/>
        <end position="324"/>
    </location>
</feature>
<feature type="strand" evidence="2">
    <location>
        <begin position="325"/>
        <end position="330"/>
    </location>
</feature>
<feature type="strand" evidence="2">
    <location>
        <begin position="333"/>
        <end position="339"/>
    </location>
</feature>
<feature type="turn" evidence="2">
    <location>
        <begin position="340"/>
        <end position="342"/>
    </location>
</feature>
<feature type="strand" evidence="2">
    <location>
        <begin position="345"/>
        <end position="350"/>
    </location>
</feature>
<feature type="strand" evidence="2">
    <location>
        <begin position="355"/>
        <end position="361"/>
    </location>
</feature>
<feature type="strand" evidence="2">
    <location>
        <begin position="364"/>
        <end position="369"/>
    </location>
</feature>
<feature type="strand" evidence="2">
    <location>
        <begin position="374"/>
        <end position="378"/>
    </location>
</feature>
<feature type="turn" evidence="2">
    <location>
        <begin position="379"/>
        <end position="381"/>
    </location>
</feature>
<feature type="strand" evidence="2">
    <location>
        <begin position="384"/>
        <end position="388"/>
    </location>
</feature>
<feature type="strand" evidence="2">
    <location>
        <begin position="395"/>
        <end position="401"/>
    </location>
</feature>
<feature type="strand" evidence="2">
    <location>
        <begin position="413"/>
        <end position="419"/>
    </location>
</feature>
<feature type="strand" evidence="2">
    <location>
        <begin position="424"/>
        <end position="429"/>
    </location>
</feature>
<protein>
    <recommendedName>
        <fullName>Ribosome assembly protein SQT1</fullName>
    </recommendedName>
</protein>
<reference key="1">
    <citation type="journal article" date="1997" name="Mol. Cell. Biol.">
        <title>SQT1, which encodes an essential WD domain protein of Saccharomyces cerevisiae, suppresses dominant-negative mutations of the ribosomal protein gene QSR1.</title>
        <authorList>
            <person name="Eisinger D.P."/>
            <person name="Dick F.A."/>
            <person name="Denke E."/>
            <person name="Trumpower B.L."/>
        </authorList>
    </citation>
    <scope>NUCLEOTIDE SEQUENCE [GENOMIC DNA]</scope>
</reference>
<reference key="2">
    <citation type="journal article" date="1995" name="Yeast">
        <title>Nucleotide sequence and analysis of the centromeric region of yeast chromosome IX.</title>
        <authorList>
            <person name="Voss H."/>
            <person name="Tamames J."/>
            <person name="Teodoru C."/>
            <person name="Valencia A."/>
            <person name="Sensen C."/>
            <person name="Wiemann S."/>
            <person name="Schwager C."/>
            <person name="Zimmermann J."/>
            <person name="Sander C."/>
            <person name="Ansorge W."/>
        </authorList>
    </citation>
    <scope>NUCLEOTIDE SEQUENCE [GENOMIC DNA]</scope>
    <source>
        <strain>ATCC 204508 / S288c</strain>
    </source>
</reference>
<reference key="3">
    <citation type="journal article" date="1997" name="Nature">
        <title>The nucleotide sequence of Saccharomyces cerevisiae chromosome IX.</title>
        <authorList>
            <person name="Churcher C.M."/>
            <person name="Bowman S."/>
            <person name="Badcock K."/>
            <person name="Bankier A.T."/>
            <person name="Brown D."/>
            <person name="Chillingworth T."/>
            <person name="Connor R."/>
            <person name="Devlin K."/>
            <person name="Gentles S."/>
            <person name="Hamlin N."/>
            <person name="Harris D.E."/>
            <person name="Horsnell T."/>
            <person name="Hunt S."/>
            <person name="Jagels K."/>
            <person name="Jones M."/>
            <person name="Lye G."/>
            <person name="Moule S."/>
            <person name="Odell C."/>
            <person name="Pearson D."/>
            <person name="Rajandream M.A."/>
            <person name="Rice P."/>
            <person name="Rowley N."/>
            <person name="Skelton J."/>
            <person name="Smith V."/>
            <person name="Walsh S.V."/>
            <person name="Whitehead S."/>
            <person name="Barrell B.G."/>
        </authorList>
    </citation>
    <scope>NUCLEOTIDE SEQUENCE [LARGE SCALE GENOMIC DNA]</scope>
    <source>
        <strain>ATCC 204508 / S288c</strain>
    </source>
</reference>
<reference key="4">
    <citation type="journal article" date="2014" name="G3 (Bethesda)">
        <title>The reference genome sequence of Saccharomyces cerevisiae: Then and now.</title>
        <authorList>
            <person name="Engel S.R."/>
            <person name="Dietrich F.S."/>
            <person name="Fisk D.G."/>
            <person name="Binkley G."/>
            <person name="Balakrishnan R."/>
            <person name="Costanzo M.C."/>
            <person name="Dwight S.S."/>
            <person name="Hitz B.C."/>
            <person name="Karra K."/>
            <person name="Nash R.S."/>
            <person name="Weng S."/>
            <person name="Wong E.D."/>
            <person name="Lloyd P."/>
            <person name="Skrzypek M.S."/>
            <person name="Miyasato S.R."/>
            <person name="Simison M."/>
            <person name="Cherry J.M."/>
        </authorList>
    </citation>
    <scope>GENOME REANNOTATION</scope>
    <source>
        <strain>ATCC 204508 / S288c</strain>
    </source>
</reference>
<reference key="5">
    <citation type="journal article" date="1993" name="Eur. J. Cell Biol.">
        <title>Multicopy STS1 restores both protein transport and ribosomal RNA stability in a new yeast sec23 mutant allele.</title>
        <authorList>
            <person name="Liang S."/>
            <person name="Lacroute F."/>
            <person name="Kepes F."/>
        </authorList>
    </citation>
    <scope>NUCLEOTIDE SEQUENCE [GENOMIC DNA] OF 1-224</scope>
</reference>
<reference key="6">
    <citation type="journal article" date="2003" name="Nature">
        <title>Global analysis of protein expression in yeast.</title>
        <authorList>
            <person name="Ghaemmaghami S."/>
            <person name="Huh W.-K."/>
            <person name="Bower K."/>
            <person name="Howson R.W."/>
            <person name="Belle A."/>
            <person name="Dephoure N."/>
            <person name="O'Shea E.K."/>
            <person name="Weissman J.S."/>
        </authorList>
    </citation>
    <scope>LEVEL OF PROTEIN EXPRESSION [LARGE SCALE ANALYSIS]</scope>
</reference>
<name>SQT1_YEAST</name>
<accession>P35184</accession>
<accession>D6VVU2</accession>
<comment type="function">
    <text>May be involved in the late step of 60S ribosomal subunit assembly or modification in the cytoplasm.</text>
</comment>
<comment type="subunit">
    <text>Interacts strongly with QSR1. Part of an oligomeric protein complex that is loosely associated with ribosomes.</text>
</comment>
<comment type="interaction">
    <interactant intactId="EBI-17971">
        <id>P35184</id>
    </interactant>
    <interactant intactId="EBI-15270">
        <id>P41805</id>
        <label>RPL10</label>
    </interactant>
    <organismsDiffer>false</organismsDiffer>
    <experiments>2</experiments>
</comment>
<comment type="miscellaneous">
    <text evidence="1">Present with 19700 molecules/cell in log phase SD medium.</text>
</comment>
<proteinExistence type="evidence at protein level"/>
<keyword id="KW-0002">3D-structure</keyword>
<keyword id="KW-1185">Reference proteome</keyword>
<keyword id="KW-0677">Repeat</keyword>
<keyword id="KW-0853">WD repeat</keyword>
<sequence>MEPQEEFITTEEVEQEIVPTVEVEQDVPVDIEGENDDDDEMMNDDEEALEVDMSNNSLTYFDKHTDSVFAIGHHPNLPLVCTGGGDNLAHLWTSHSQPPKFAGTLTGYGESVISCSFTSEGGFLVTADMSGKVLVHMGQKGGAQWKLASQMQEVEEIVWLKTHPTIARTFAFGATDGSVWCYQINEQDGSLEQLMSGFVHQQDCSMGEFINTDKGENTLELVTCSLDSTIVAWNCFTGQQLFKITQAEIKGLEAPWISLSLAPETLTKGNSGVVACGSNNGLLAVINCNNGGAILHLSTVIELKPEQDELDASIESISWSSKFSLMAIGLVCGEILLYDTSAWRVRHKFVLEDSVTKLMFDNDDLFASCINGKVYQFNARTGQEKFVCVGHNMGVLDFILLHPVANTGTEQKRKVITAGDEGVSLVFEVPN</sequence>
<evidence type="ECO:0000269" key="1">
    <source>
    </source>
</evidence>
<evidence type="ECO:0007829" key="2">
    <source>
        <dbReference type="PDB" id="4ZOX"/>
    </source>
</evidence>
<evidence type="ECO:0007829" key="3">
    <source>
        <dbReference type="PDB" id="5AMS"/>
    </source>
</evidence>
<organism>
    <name type="scientific">Saccharomyces cerevisiae (strain ATCC 204508 / S288c)</name>
    <name type="common">Baker's yeast</name>
    <dbReference type="NCBI Taxonomy" id="559292"/>
    <lineage>
        <taxon>Eukaryota</taxon>
        <taxon>Fungi</taxon>
        <taxon>Dikarya</taxon>
        <taxon>Ascomycota</taxon>
        <taxon>Saccharomycotina</taxon>
        <taxon>Saccharomycetes</taxon>
        <taxon>Saccharomycetales</taxon>
        <taxon>Saccharomycetaceae</taxon>
        <taxon>Saccharomyces</taxon>
    </lineage>
</organism>
<dbReference type="EMBL" id="U75717">
    <property type="protein sequence ID" value="AAB69630.1"/>
    <property type="molecule type" value="Genomic_DNA"/>
</dbReference>
<dbReference type="EMBL" id="X79743">
    <property type="status" value="NOT_ANNOTATED_CDS"/>
    <property type="molecule type" value="Genomic_DNA"/>
</dbReference>
<dbReference type="EMBL" id="Z37996">
    <property type="protein sequence ID" value="CAA86082.1"/>
    <property type="molecule type" value="Genomic_DNA"/>
</dbReference>
<dbReference type="EMBL" id="X75916">
    <property type="protein sequence ID" value="CAA53516.1"/>
    <property type="status" value="ALT_SEQ"/>
    <property type="molecule type" value="Genomic_DNA"/>
</dbReference>
<dbReference type="EMBL" id="BK006942">
    <property type="protein sequence ID" value="DAA08558.1"/>
    <property type="molecule type" value="Genomic_DNA"/>
</dbReference>
<dbReference type="PIR" id="S48356">
    <property type="entry name" value="S48356"/>
</dbReference>
<dbReference type="RefSeq" id="NP_012277.1">
    <property type="nucleotide sequence ID" value="NM_001179534.1"/>
</dbReference>
<dbReference type="PDB" id="4ZOV">
    <property type="method" value="X-ray"/>
    <property type="resolution" value="2.00 A"/>
    <property type="chains" value="A/B=53-431"/>
</dbReference>
<dbReference type="PDB" id="4ZOX">
    <property type="method" value="X-ray"/>
    <property type="resolution" value="1.60 A"/>
    <property type="chains" value="A=53-431"/>
</dbReference>
<dbReference type="PDB" id="5AMS">
    <property type="method" value="X-ray"/>
    <property type="resolution" value="3.35 A"/>
    <property type="chains" value="A/B=1-431"/>
</dbReference>
<dbReference type="PDBsum" id="4ZOV"/>
<dbReference type="PDBsum" id="4ZOX"/>
<dbReference type="PDBsum" id="5AMS"/>
<dbReference type="SMR" id="P35184"/>
<dbReference type="BioGRID" id="35004">
    <property type="interactions" value="73"/>
</dbReference>
<dbReference type="DIP" id="DIP-2508N"/>
<dbReference type="FunCoup" id="P35184">
    <property type="interactions" value="720"/>
</dbReference>
<dbReference type="IntAct" id="P35184">
    <property type="interactions" value="20"/>
</dbReference>
<dbReference type="MINT" id="P35184"/>
<dbReference type="STRING" id="4932.YIR012W"/>
<dbReference type="iPTMnet" id="P35184"/>
<dbReference type="PaxDb" id="4932-YIR012W"/>
<dbReference type="PeptideAtlas" id="P35184"/>
<dbReference type="EnsemblFungi" id="YIR012W_mRNA">
    <property type="protein sequence ID" value="YIR012W"/>
    <property type="gene ID" value="YIR012W"/>
</dbReference>
<dbReference type="GeneID" id="854829"/>
<dbReference type="KEGG" id="sce:YIR012W"/>
<dbReference type="AGR" id="SGD:S000001451"/>
<dbReference type="SGD" id="S000001451">
    <property type="gene designation" value="SQT1"/>
</dbReference>
<dbReference type="VEuPathDB" id="FungiDB:YIR012W"/>
<dbReference type="eggNOG" id="KOG0296">
    <property type="taxonomic scope" value="Eukaryota"/>
</dbReference>
<dbReference type="GeneTree" id="ENSGT00940000153648"/>
<dbReference type="HOGENOM" id="CLU_000288_57_9_1"/>
<dbReference type="InParanoid" id="P35184"/>
<dbReference type="OMA" id="SIWDYSK"/>
<dbReference type="OrthoDB" id="10261640at2759"/>
<dbReference type="BioCyc" id="YEAST:G3O-31433-MONOMER"/>
<dbReference type="BioGRID-ORCS" id="854829">
    <property type="hits" value="10 hits in 10 CRISPR screens"/>
</dbReference>
<dbReference type="EvolutionaryTrace" id="P35184"/>
<dbReference type="PRO" id="PR:P35184"/>
<dbReference type="Proteomes" id="UP000002311">
    <property type="component" value="Chromosome IX"/>
</dbReference>
<dbReference type="RNAct" id="P35184">
    <property type="molecule type" value="protein"/>
</dbReference>
<dbReference type="GO" id="GO:0005737">
    <property type="term" value="C:cytoplasm"/>
    <property type="evidence" value="ECO:0007005"/>
    <property type="project" value="SGD"/>
</dbReference>
<dbReference type="GO" id="GO:0005829">
    <property type="term" value="C:cytosol"/>
    <property type="evidence" value="ECO:0000314"/>
    <property type="project" value="SGD"/>
</dbReference>
<dbReference type="GO" id="GO:0051082">
    <property type="term" value="F:unfolded protein binding"/>
    <property type="evidence" value="ECO:0000314"/>
    <property type="project" value="SGD"/>
</dbReference>
<dbReference type="GO" id="GO:0000027">
    <property type="term" value="P:ribosomal large subunit assembly"/>
    <property type="evidence" value="ECO:0000315"/>
    <property type="project" value="SGD"/>
</dbReference>
<dbReference type="GO" id="GO:0042273">
    <property type="term" value="P:ribosomal large subunit biogenesis"/>
    <property type="evidence" value="ECO:0000315"/>
    <property type="project" value="SGD"/>
</dbReference>
<dbReference type="FunFam" id="2.130.10.10:FF:000630">
    <property type="entry name" value="Ribosome assembly protein SQT1"/>
    <property type="match status" value="1"/>
</dbReference>
<dbReference type="Gene3D" id="2.130.10.10">
    <property type="entry name" value="YVTN repeat-like/Quinoprotein amine dehydrogenase"/>
    <property type="match status" value="1"/>
</dbReference>
<dbReference type="InterPro" id="IPR015943">
    <property type="entry name" value="WD40/YVTN_repeat-like_dom_sf"/>
</dbReference>
<dbReference type="InterPro" id="IPR036322">
    <property type="entry name" value="WD40_repeat_dom_sf"/>
</dbReference>
<dbReference type="InterPro" id="IPR001680">
    <property type="entry name" value="WD40_rpt"/>
</dbReference>
<dbReference type="InterPro" id="IPR051179">
    <property type="entry name" value="WD_repeat_multifunction"/>
</dbReference>
<dbReference type="PANTHER" id="PTHR19857:SF8">
    <property type="entry name" value="ANGIO-ASSOCIATED MIGRATORY CELL PROTEIN"/>
    <property type="match status" value="1"/>
</dbReference>
<dbReference type="PANTHER" id="PTHR19857">
    <property type="entry name" value="MITOCHONDRIAL DIVISION PROTEIN 1-RELATED"/>
    <property type="match status" value="1"/>
</dbReference>
<dbReference type="Pfam" id="PF00400">
    <property type="entry name" value="WD40"/>
    <property type="match status" value="2"/>
</dbReference>
<dbReference type="SMART" id="SM00320">
    <property type="entry name" value="WD40"/>
    <property type="match status" value="5"/>
</dbReference>
<dbReference type="SUPFAM" id="SSF50978">
    <property type="entry name" value="WD40 repeat-like"/>
    <property type="match status" value="1"/>
</dbReference>
<dbReference type="PROSITE" id="PS00678">
    <property type="entry name" value="WD_REPEATS_1"/>
    <property type="match status" value="1"/>
</dbReference>
<dbReference type="PROSITE" id="PS50082">
    <property type="entry name" value="WD_REPEATS_2"/>
    <property type="match status" value="1"/>
</dbReference>
<dbReference type="PROSITE" id="PS50294">
    <property type="entry name" value="WD_REPEATS_REGION"/>
    <property type="match status" value="1"/>
</dbReference>